<feature type="chain" id="PRO_0000066505" description="Uncharacterized protein in sor 3'region">
    <location>
        <begin position="1"/>
        <end position="77" status="greater than"/>
    </location>
</feature>
<feature type="non-terminal residue">
    <location>
        <position position="77"/>
    </location>
</feature>
<sequence length="77" mass="8665">MSYPYGNPYYPQGGYPTQGYPQGNPYYQQNSNFSFIMCAQPIGLGGKQMMIPINHPIDLQYVAQQAVMYLMGQGFQA</sequence>
<accession>P29088</accession>
<comment type="induction">
    <text>By anaerobiosis.</text>
</comment>
<dbReference type="EMBL" id="X56616">
    <property type="protein sequence ID" value="CAA39954.1"/>
    <property type="molecule type" value="Genomic_DNA"/>
</dbReference>
<dbReference type="PIR" id="D43331">
    <property type="entry name" value="D43331"/>
</dbReference>
<dbReference type="SMR" id="P29088"/>
<protein>
    <recommendedName>
        <fullName>Uncharacterized protein in sor 3'region</fullName>
    </recommendedName>
    <alternativeName>
        <fullName>ORF4</fullName>
    </alternativeName>
</protein>
<proteinExistence type="evidence at transcript level"/>
<name>YSO4_ACIAM</name>
<reference key="1">
    <citation type="journal article" date="1992" name="J. Bacteriol.">
        <title>Molecular characterization of the sor gene, which encodes the sulfur oxygenase/reductase of the thermoacidophilic Archaeum Desulfurolobus ambivalens.</title>
        <authorList>
            <person name="Kletzin A."/>
        </authorList>
    </citation>
    <scope>NUCLEOTIDE SEQUENCE [GENOMIC DNA]</scope>
    <source>
        <strain>Lei 10 / DSM 3772 / JCM 9191</strain>
    </source>
</reference>
<organism>
    <name type="scientific">Acidianus ambivalens</name>
    <name type="common">Desulfurolobus ambivalens</name>
    <dbReference type="NCBI Taxonomy" id="2283"/>
    <lineage>
        <taxon>Archaea</taxon>
        <taxon>Thermoproteota</taxon>
        <taxon>Thermoprotei</taxon>
        <taxon>Sulfolobales</taxon>
        <taxon>Sulfolobaceae</taxon>
        <taxon>Acidianus</taxon>
    </lineage>
</organism>